<evidence type="ECO:0000250" key="1"/>
<evidence type="ECO:0000305" key="2"/>
<protein>
    <recommendedName>
        <fullName>Nitrogenase-stabilizing/protective protein NifW</fullName>
    </recommendedName>
</protein>
<gene>
    <name type="primary">nifW</name>
</gene>
<accession>P59834</accession>
<sequence>CSLPVLATFHRKLRAEVPLQNRLEDNDRAPWLLARRLLAESYQQQFQESGT</sequence>
<comment type="function">
    <text evidence="1">May protect the nitrogenase Fe-Mo protein from oxidative damage.</text>
</comment>
<comment type="subunit">
    <text evidence="1">Homotrimer; associates with NifD.</text>
</comment>
<comment type="similarity">
    <text evidence="2">Belongs to the NifW family.</text>
</comment>
<keyword id="KW-0535">Nitrogen fixation</keyword>
<dbReference type="EMBL" id="X05887">
    <property type="protein sequence ID" value="CAA29311.1"/>
    <property type="molecule type" value="Genomic_DNA"/>
</dbReference>
<dbReference type="SMR" id="P59834"/>
<dbReference type="STRING" id="571.AB185_16980"/>
<dbReference type="eggNOG" id="ENOG50330BP">
    <property type="taxonomic scope" value="Bacteria"/>
</dbReference>
<dbReference type="GO" id="GO:0009399">
    <property type="term" value="P:nitrogen fixation"/>
    <property type="evidence" value="ECO:0007669"/>
    <property type="project" value="UniProtKB-KW"/>
</dbReference>
<name>NIFW_KLEOX</name>
<feature type="chain" id="PRO_0000219533" description="Nitrogenase-stabilizing/protective protein NifW">
    <location>
        <begin position="1" status="less than"/>
        <end position="51"/>
    </location>
</feature>
<feature type="non-terminal residue">
    <location>
        <position position="1"/>
    </location>
</feature>
<reference key="1">
    <citation type="journal article" date="1987" name="Eur. J. Biochem.">
        <title>The nucleotide sequence of the nifM gene of Klebsiella pneumoniae and identification of a new nif gene: nifZ.</title>
        <authorList>
            <person name="Paul W."/>
            <person name="Merrick M.J."/>
        </authorList>
    </citation>
    <scope>NUCLEOTIDE SEQUENCE [GENOMIC DNA]</scope>
    <source>
        <strain>M5a1</strain>
    </source>
</reference>
<organism>
    <name type="scientific">Klebsiella oxytoca</name>
    <dbReference type="NCBI Taxonomy" id="571"/>
    <lineage>
        <taxon>Bacteria</taxon>
        <taxon>Pseudomonadati</taxon>
        <taxon>Pseudomonadota</taxon>
        <taxon>Gammaproteobacteria</taxon>
        <taxon>Enterobacterales</taxon>
        <taxon>Enterobacteriaceae</taxon>
        <taxon>Klebsiella/Raoultella group</taxon>
        <taxon>Klebsiella</taxon>
    </lineage>
</organism>
<proteinExistence type="inferred from homology"/>